<proteinExistence type="inferred from homology"/>
<organism>
    <name type="scientific">Cronobacter turicensis (strain DSM 18703 / CCUG 55852 / LMG 23827 / z3032)</name>
    <dbReference type="NCBI Taxonomy" id="693216"/>
    <lineage>
        <taxon>Bacteria</taxon>
        <taxon>Pseudomonadati</taxon>
        <taxon>Pseudomonadota</taxon>
        <taxon>Gammaproteobacteria</taxon>
        <taxon>Enterobacterales</taxon>
        <taxon>Enterobacteriaceae</taxon>
        <taxon>Cronobacter</taxon>
    </lineage>
</organism>
<geneLocation type="plasmid">
    <name>pCTU1</name>
</geneLocation>
<name>IMAND_CROTZ</name>
<reference key="1">
    <citation type="journal article" date="2011" name="J. Bacteriol.">
        <title>Complete genome sequence of Cronobacter turicensis LMG 23827, a food-borne pathogen causing deaths in neonates.</title>
        <authorList>
            <person name="Stephan R."/>
            <person name="Lehner A."/>
            <person name="Tischler P."/>
            <person name="Rattei T."/>
        </authorList>
    </citation>
    <scope>NUCLEOTIDE SEQUENCE [LARGE SCALE GENOMIC DNA]</scope>
    <source>
        <strain>DSM 18703 / CCUG 55852 / LMG 23827 / z3032</strain>
    </source>
</reference>
<reference key="2">
    <citation type="journal article" date="2014" name="Biochemistry">
        <title>Discovery of function in the enolase superfamily: D-mannonate and D-gluconate dehydratases in the D-mannonate dehydratase subgroup.</title>
        <authorList>
            <person name="Wichelecki D.J."/>
            <person name="Balthazor B.M."/>
            <person name="Chau A.C."/>
            <person name="Vetting M.W."/>
            <person name="Fedorov A.A."/>
            <person name="Fedorov E.V."/>
            <person name="Lukk T."/>
            <person name="Patskovsky Y.V."/>
            <person name="Stead M.B."/>
            <person name="Hillerich B.S."/>
            <person name="Seidel R.D."/>
            <person name="Almo S.C."/>
            <person name="Gerlt J.A."/>
        </authorList>
    </citation>
    <scope>FUNCTION</scope>
    <scope>LACK OF D-MANNONATE DEHYDRATASE ACTIVITY</scope>
    <source>
        <strain>DSM 18703 / CCUG 55852 / LMG 23827 / z3032</strain>
    </source>
</reference>
<sequence length="399" mass="44861">MTPVIIKNIECFITRPDRHNLVTVRVTTDQGVTGHGCATFQQRPLAVKTLVEEYLQPLLTGRDANNIEDLWQMMNVNAYWRNGPVMNNAISGVDMALWDIKSQLAGMPLYQLFGGKSRDAIPAYSHASGDTLDALFASVDALIEKGYRHIRCQLGFYGGTASGLHAPENPTPGAWFDQQEYMSNTVDMFRALREKYGWKLHILHDVHERLFPQQAIQLAKQLEPYQPYFIEDILPPQQSAWLEQVRQHSCVPLAMGELFNNPSEWHDLIVNRRIDFIRCHVSQIGGITPALKLAHLCQAFGVRLAWHGPGDMTPVGVAVNTHLNIHLHNAAIQEFIPRSAMTDKIFPGAPEVKDGFIYPPVNAGIGVGFNEELARAHPVMYRPHEWTQSRLPDGTLHTP</sequence>
<keyword id="KW-0456">Lyase</keyword>
<keyword id="KW-0460">Magnesium</keyword>
<keyword id="KW-0479">Metal-binding</keyword>
<keyword id="KW-0614">Plasmid</keyword>
<accession>C9Y5D5</accession>
<dbReference type="EMBL" id="FN543094">
    <property type="protein sequence ID" value="CBA34580.1"/>
    <property type="molecule type" value="Genomic_DNA"/>
</dbReference>
<dbReference type="SMR" id="C9Y5D5"/>
<dbReference type="KEGG" id="ctu:Ctu_1p00430"/>
<dbReference type="PATRIC" id="fig|693216.3.peg.4037"/>
<dbReference type="HOGENOM" id="CLU_030273_6_1_6"/>
<dbReference type="Proteomes" id="UP000002069">
    <property type="component" value="Plasmid pCTU1"/>
</dbReference>
<dbReference type="GO" id="GO:0016829">
    <property type="term" value="F:lyase activity"/>
    <property type="evidence" value="ECO:0007669"/>
    <property type="project" value="UniProtKB-KW"/>
</dbReference>
<dbReference type="GO" id="GO:0000287">
    <property type="term" value="F:magnesium ion binding"/>
    <property type="evidence" value="ECO:0000250"/>
    <property type="project" value="UniProtKB"/>
</dbReference>
<dbReference type="FunFam" id="3.20.20.120:FF:000011">
    <property type="entry name" value="D-galactonate dehydratase family member VSWAT3_13707"/>
    <property type="match status" value="1"/>
</dbReference>
<dbReference type="Gene3D" id="3.20.20.120">
    <property type="entry name" value="Enolase-like C-terminal domain"/>
    <property type="match status" value="1"/>
</dbReference>
<dbReference type="Gene3D" id="3.30.390.10">
    <property type="entry name" value="Enolase-like, N-terminal domain"/>
    <property type="match status" value="1"/>
</dbReference>
<dbReference type="InterPro" id="IPR034589">
    <property type="entry name" value="D-mannonate_dehydratase-like"/>
</dbReference>
<dbReference type="InterPro" id="IPR034593">
    <property type="entry name" value="DgoD-like"/>
</dbReference>
<dbReference type="InterPro" id="IPR036849">
    <property type="entry name" value="Enolase-like_C_sf"/>
</dbReference>
<dbReference type="InterPro" id="IPR029017">
    <property type="entry name" value="Enolase-like_N"/>
</dbReference>
<dbReference type="InterPro" id="IPR029065">
    <property type="entry name" value="Enolase_C-like"/>
</dbReference>
<dbReference type="InterPro" id="IPR013342">
    <property type="entry name" value="Mandelate_racemase_C"/>
</dbReference>
<dbReference type="InterPro" id="IPR013341">
    <property type="entry name" value="Mandelate_racemase_N_dom"/>
</dbReference>
<dbReference type="PANTHER" id="PTHR48080">
    <property type="entry name" value="D-GALACTONATE DEHYDRATASE-RELATED"/>
    <property type="match status" value="1"/>
</dbReference>
<dbReference type="PANTHER" id="PTHR48080:SF6">
    <property type="entry name" value="STARVATION-SENSING PROTEIN RSPA"/>
    <property type="match status" value="1"/>
</dbReference>
<dbReference type="Pfam" id="PF13378">
    <property type="entry name" value="MR_MLE_C"/>
    <property type="match status" value="1"/>
</dbReference>
<dbReference type="Pfam" id="PF02746">
    <property type="entry name" value="MR_MLE_N"/>
    <property type="match status" value="1"/>
</dbReference>
<dbReference type="SFLD" id="SFLDS00001">
    <property type="entry name" value="Enolase"/>
    <property type="match status" value="1"/>
</dbReference>
<dbReference type="SFLD" id="SFLDG00033">
    <property type="entry name" value="mannonate_dehydratase"/>
    <property type="match status" value="1"/>
</dbReference>
<dbReference type="SMART" id="SM00922">
    <property type="entry name" value="MR_MLE"/>
    <property type="match status" value="1"/>
</dbReference>
<dbReference type="SUPFAM" id="SSF51604">
    <property type="entry name" value="Enolase C-terminal domain-like"/>
    <property type="match status" value="1"/>
</dbReference>
<dbReference type="SUPFAM" id="SSF54826">
    <property type="entry name" value="Enolase N-terminal domain-like"/>
    <property type="match status" value="1"/>
</dbReference>
<evidence type="ECO:0000250" key="1"/>
<evidence type="ECO:0000269" key="2">
    <source>
    </source>
</evidence>
<evidence type="ECO:0000305" key="3"/>
<protein>
    <recommendedName>
        <fullName>D-galactonate dehydratase family member Ctu_1p00430</fullName>
    </recommendedName>
</protein>
<gene>
    <name type="ordered locus">Ctu_1p00430</name>
</gene>
<feature type="chain" id="PRO_0000429905" description="D-galactonate dehydratase family member Ctu_1p00430">
    <location>
        <begin position="1"/>
        <end position="399"/>
    </location>
</feature>
<feature type="binding site" evidence="1">
    <location>
        <position position="205"/>
    </location>
    <ligand>
        <name>Mg(2+)</name>
        <dbReference type="ChEBI" id="CHEBI:18420"/>
    </ligand>
</feature>
<feature type="binding site" evidence="1">
    <location>
        <position position="207"/>
    </location>
    <ligand>
        <name>D-arabinonate</name>
        <dbReference type="ChEBI" id="CHEBI:16157"/>
    </ligand>
</feature>
<feature type="binding site" evidence="1">
    <location>
        <position position="231"/>
    </location>
    <ligand>
        <name>Mg(2+)</name>
        <dbReference type="ChEBI" id="CHEBI:18420"/>
    </ligand>
</feature>
<feature type="binding site" evidence="1">
    <location>
        <position position="257"/>
    </location>
    <ligand>
        <name>D-arabinonate</name>
        <dbReference type="ChEBI" id="CHEBI:16157"/>
    </ligand>
</feature>
<feature type="binding site" evidence="1">
    <location>
        <position position="257"/>
    </location>
    <ligand>
        <name>Mg(2+)</name>
        <dbReference type="ChEBI" id="CHEBI:18420"/>
    </ligand>
</feature>
<feature type="binding site" evidence="1">
    <location>
        <position position="278"/>
    </location>
    <ligand>
        <name>D-arabinonate</name>
        <dbReference type="ChEBI" id="CHEBI:16157"/>
    </ligand>
</feature>
<feature type="binding site" evidence="1">
    <location>
        <position position="307"/>
    </location>
    <ligand>
        <name>D-arabinonate</name>
        <dbReference type="ChEBI" id="CHEBI:16157"/>
    </ligand>
</feature>
<feature type="binding site" evidence="1">
    <location>
        <position position="334"/>
    </location>
    <ligand>
        <name>D-arabinonate</name>
        <dbReference type="ChEBI" id="CHEBI:16157"/>
    </ligand>
</feature>
<comment type="function">
    <text evidence="2">Has no detectable activity with D-mannonate and with a panel of 70 other acid sugars (in vitro), in spite of the conservation of the residues that are expected to be important for catalytic activity and cofactor binding. May have evolved a divergent function.</text>
</comment>
<comment type="similarity">
    <text evidence="3">Belongs to the mandelate racemase/muconate lactonizing enzyme family. GalD subfamily.</text>
</comment>